<evidence type="ECO:0000250" key="1">
    <source>
        <dbReference type="UniProtKB" id="P0CK56"/>
    </source>
</evidence>
<evidence type="ECO:0000256" key="2">
    <source>
        <dbReference type="SAM" id="MobiDB-lite"/>
    </source>
</evidence>
<evidence type="ECO:0000305" key="3"/>
<gene>
    <name type="ORF">BDLF4</name>
</gene>
<sequence>MSDQGRLSLPRGEGGTDEPNPRHLCSYSKLEFHLPLPESMASVFACWGCGEYHVCDGSSECTLIETHEGVVCALTGNYMGPHFQPALRPWTEIRQDTQDQRDKWEPEQVQGLVKTVVNHLYHYFLNENVISGVSEALFDQEGALRPHIPALVSFVFPCCLMLFRGASSEKVVDVVLSLYIHVIISIYSQKTVYGALLFKSTRNKRYDAVAKRMRELWMSTLTTKC</sequence>
<organismHost>
    <name type="scientific">Homo sapiens</name>
    <name type="common">Human</name>
    <dbReference type="NCBI Taxonomy" id="9606"/>
</organismHost>
<organism>
    <name type="scientific">Epstein-Barr virus (strain AG876)</name>
    <name type="common">HHV-4</name>
    <name type="synonym">Human herpesvirus 4</name>
    <dbReference type="NCBI Taxonomy" id="82830"/>
    <lineage>
        <taxon>Viruses</taxon>
        <taxon>Duplodnaviria</taxon>
        <taxon>Heunggongvirae</taxon>
        <taxon>Peploviricota</taxon>
        <taxon>Herviviricetes</taxon>
        <taxon>Herpesvirales</taxon>
        <taxon>Orthoherpesviridae</taxon>
        <taxon>Gammaherpesvirinae</taxon>
        <taxon>Lymphocryptovirus</taxon>
        <taxon>Lymphocryptovirus humangamma4</taxon>
        <taxon>Epstein-Barr virus (strain GD1)</taxon>
    </lineage>
</organism>
<keyword id="KW-0244">Early protein</keyword>
<keyword id="KW-1185">Reference proteome</keyword>
<dbReference type="EMBL" id="DQ279927">
    <property type="protein sequence ID" value="ABB89268.1"/>
    <property type="molecule type" value="Genomic_DNA"/>
</dbReference>
<dbReference type="RefSeq" id="YP_001129488.1">
    <property type="nucleotide sequence ID" value="NC_009334.1"/>
</dbReference>
<dbReference type="RefSeq" id="YP_401693.1">
    <property type="nucleotide sequence ID" value="NC_007605.1"/>
</dbReference>
<dbReference type="SMR" id="P0CK57"/>
<dbReference type="IntAct" id="P0CK57">
    <property type="interactions" value="2"/>
</dbReference>
<dbReference type="MINT" id="P0CK57"/>
<dbReference type="DNASU" id="3783695"/>
<dbReference type="GeneID" id="3783695"/>
<dbReference type="KEGG" id="vg:3783695"/>
<dbReference type="KEGG" id="vg:5176193"/>
<dbReference type="Proteomes" id="UP000007639">
    <property type="component" value="Genome"/>
</dbReference>
<dbReference type="InterPro" id="IPR004289">
    <property type="entry name" value="Herpes_UL92"/>
</dbReference>
<dbReference type="Pfam" id="PF03048">
    <property type="entry name" value="Herpes_UL92"/>
    <property type="match status" value="1"/>
</dbReference>
<protein>
    <recommendedName>
        <fullName evidence="1">Late gene expression regulator BDLF4</fullName>
    </recommendedName>
</protein>
<feature type="chain" id="PRO_0000415973" description="Late gene expression regulator BDLF4">
    <location>
        <begin position="1"/>
        <end position="225"/>
    </location>
</feature>
<feature type="region of interest" description="Disordered" evidence="2">
    <location>
        <begin position="1"/>
        <end position="20"/>
    </location>
</feature>
<proteinExistence type="inferred from homology"/>
<reference key="1">
    <citation type="journal article" date="2006" name="Virology">
        <title>The genome of Epstein-Barr virus type 2 strain AG876.</title>
        <authorList>
            <person name="Dolan A."/>
            <person name="Addison C."/>
            <person name="Gatherer D."/>
            <person name="Davison A.J."/>
            <person name="McGeoch D.J."/>
        </authorList>
    </citation>
    <scope>NUCLEOTIDE SEQUENCE [LARGE SCALE GENOMIC DNA]</scope>
</reference>
<comment type="function">
    <text evidence="1">Part of the viral pre-initiation complex (vPIC) that is responsible for the expression of vPIC-dependent late genes (By similarity). vPIC is composed of at least BcRF1 that binds the viral TATT box, BDLF3.5, BDLF4, BFRF2, BGLF3, BGLF4 and BVLF1 (By similarity).</text>
</comment>
<comment type="similarity">
    <text evidence="3">Belongs to the herpesviridae UL92 family.</text>
</comment>
<accession>P0CK57</accession>
<accession>P03223</accession>
<accession>Q777C6</accession>
<name>UL92_EBVA8</name>